<reference key="1">
    <citation type="journal article" date="2005" name="Proc. Natl. Acad. Sci. U.S.A.">
        <title>Whole genome sequence of Staphylococcus saprophyticus reveals the pathogenesis of uncomplicated urinary tract infection.</title>
        <authorList>
            <person name="Kuroda M."/>
            <person name="Yamashita A."/>
            <person name="Hirakawa H."/>
            <person name="Kumano M."/>
            <person name="Morikawa K."/>
            <person name="Higashide M."/>
            <person name="Maruyama A."/>
            <person name="Inose Y."/>
            <person name="Matoba K."/>
            <person name="Toh H."/>
            <person name="Kuhara S."/>
            <person name="Hattori M."/>
            <person name="Ohta T."/>
        </authorList>
    </citation>
    <scope>NUCLEOTIDE SEQUENCE [LARGE SCALE GENOMIC DNA]</scope>
    <source>
        <strain>ATCC 15305 / DSM 20229 / NCIMB 8711 / NCTC 7292 / S-41</strain>
    </source>
</reference>
<keyword id="KW-0963">Cytoplasm</keyword>
<keyword id="KW-0328">Glycosyltransferase</keyword>
<keyword id="KW-0660">Purine salvage</keyword>
<keyword id="KW-1185">Reference proteome</keyword>
<keyword id="KW-0808">Transferase</keyword>
<comment type="function">
    <text evidence="1">Catalyzes a salvage reaction resulting in the formation of AMP, that is energically less costly than de novo synthesis.</text>
</comment>
<comment type="catalytic activity">
    <reaction evidence="1">
        <text>AMP + diphosphate = 5-phospho-alpha-D-ribose 1-diphosphate + adenine</text>
        <dbReference type="Rhea" id="RHEA:16609"/>
        <dbReference type="ChEBI" id="CHEBI:16708"/>
        <dbReference type="ChEBI" id="CHEBI:33019"/>
        <dbReference type="ChEBI" id="CHEBI:58017"/>
        <dbReference type="ChEBI" id="CHEBI:456215"/>
        <dbReference type="EC" id="2.4.2.7"/>
    </reaction>
</comment>
<comment type="pathway">
    <text evidence="1">Purine metabolism; AMP biosynthesis via salvage pathway; AMP from adenine: step 1/1.</text>
</comment>
<comment type="subunit">
    <text evidence="1">Homodimer.</text>
</comment>
<comment type="subcellular location">
    <subcellularLocation>
        <location evidence="1">Cytoplasm</location>
    </subcellularLocation>
</comment>
<comment type="similarity">
    <text evidence="1">Belongs to the purine/pyrimidine phosphoribosyltransferase family.</text>
</comment>
<protein>
    <recommendedName>
        <fullName evidence="1">Adenine phosphoribosyltransferase</fullName>
        <shortName evidence="1">APRT</shortName>
        <ecNumber evidence="1">2.4.2.7</ecNumber>
    </recommendedName>
</protein>
<organism>
    <name type="scientific">Staphylococcus saprophyticus subsp. saprophyticus (strain ATCC 15305 / DSM 20229 / NCIMB 8711 / NCTC 7292 / S-41)</name>
    <dbReference type="NCBI Taxonomy" id="342451"/>
    <lineage>
        <taxon>Bacteria</taxon>
        <taxon>Bacillati</taxon>
        <taxon>Bacillota</taxon>
        <taxon>Bacilli</taxon>
        <taxon>Bacillales</taxon>
        <taxon>Staphylococcaceae</taxon>
        <taxon>Staphylococcus</taxon>
    </lineage>
</organism>
<name>APT_STAS1</name>
<feature type="chain" id="PRO_1000000350" description="Adenine phosphoribosyltransferase">
    <location>
        <begin position="1"/>
        <end position="172"/>
    </location>
</feature>
<accession>Q49Y73</accession>
<gene>
    <name evidence="1" type="primary">apt</name>
    <name type="ordered locus">SSP1124</name>
</gene>
<proteinExistence type="inferred from homology"/>
<sequence length="172" mass="19157">MDLKQYVSEVEDWPKPGVNFKDITTIMDNGEAYGYATDQIVEYAKLRDVDIIVGPEARGFIIGCPVAYSMGIGFAPVRKEGKLPREVIRYEYDLEYGTNVLTMHKDAIKPGQRVLITDDLLATGGTIEAAIKLVEKLGGIVVGIAFIIELKYLNGIEKIKDYDVMSLISYED</sequence>
<evidence type="ECO:0000255" key="1">
    <source>
        <dbReference type="HAMAP-Rule" id="MF_00004"/>
    </source>
</evidence>
<dbReference type="EC" id="2.4.2.7" evidence="1"/>
<dbReference type="EMBL" id="AP008934">
    <property type="protein sequence ID" value="BAE18269.1"/>
    <property type="molecule type" value="Genomic_DNA"/>
</dbReference>
<dbReference type="RefSeq" id="WP_002483102.1">
    <property type="nucleotide sequence ID" value="NZ_MTGA01000038.1"/>
</dbReference>
<dbReference type="SMR" id="Q49Y73"/>
<dbReference type="KEGG" id="ssp:SSP1124"/>
<dbReference type="eggNOG" id="COG0503">
    <property type="taxonomic scope" value="Bacteria"/>
</dbReference>
<dbReference type="HOGENOM" id="CLU_063339_3_0_9"/>
<dbReference type="OrthoDB" id="9803963at2"/>
<dbReference type="UniPathway" id="UPA00588">
    <property type="reaction ID" value="UER00646"/>
</dbReference>
<dbReference type="Proteomes" id="UP000006371">
    <property type="component" value="Chromosome"/>
</dbReference>
<dbReference type="GO" id="GO:0005737">
    <property type="term" value="C:cytoplasm"/>
    <property type="evidence" value="ECO:0007669"/>
    <property type="project" value="UniProtKB-SubCell"/>
</dbReference>
<dbReference type="GO" id="GO:0002055">
    <property type="term" value="F:adenine binding"/>
    <property type="evidence" value="ECO:0007669"/>
    <property type="project" value="TreeGrafter"/>
</dbReference>
<dbReference type="GO" id="GO:0003999">
    <property type="term" value="F:adenine phosphoribosyltransferase activity"/>
    <property type="evidence" value="ECO:0007669"/>
    <property type="project" value="UniProtKB-UniRule"/>
</dbReference>
<dbReference type="GO" id="GO:0016208">
    <property type="term" value="F:AMP binding"/>
    <property type="evidence" value="ECO:0007669"/>
    <property type="project" value="TreeGrafter"/>
</dbReference>
<dbReference type="GO" id="GO:0006168">
    <property type="term" value="P:adenine salvage"/>
    <property type="evidence" value="ECO:0007669"/>
    <property type="project" value="InterPro"/>
</dbReference>
<dbReference type="GO" id="GO:0044209">
    <property type="term" value="P:AMP salvage"/>
    <property type="evidence" value="ECO:0007669"/>
    <property type="project" value="UniProtKB-UniRule"/>
</dbReference>
<dbReference type="GO" id="GO:0006166">
    <property type="term" value="P:purine ribonucleoside salvage"/>
    <property type="evidence" value="ECO:0007669"/>
    <property type="project" value="UniProtKB-KW"/>
</dbReference>
<dbReference type="CDD" id="cd06223">
    <property type="entry name" value="PRTases_typeI"/>
    <property type="match status" value="1"/>
</dbReference>
<dbReference type="FunFam" id="3.40.50.2020:FF:000004">
    <property type="entry name" value="Adenine phosphoribosyltransferase"/>
    <property type="match status" value="1"/>
</dbReference>
<dbReference type="Gene3D" id="3.40.50.2020">
    <property type="match status" value="1"/>
</dbReference>
<dbReference type="HAMAP" id="MF_00004">
    <property type="entry name" value="Aden_phosphoribosyltr"/>
    <property type="match status" value="1"/>
</dbReference>
<dbReference type="InterPro" id="IPR005764">
    <property type="entry name" value="Ade_phspho_trans"/>
</dbReference>
<dbReference type="InterPro" id="IPR000836">
    <property type="entry name" value="PRibTrfase_dom"/>
</dbReference>
<dbReference type="InterPro" id="IPR029057">
    <property type="entry name" value="PRTase-like"/>
</dbReference>
<dbReference type="InterPro" id="IPR050054">
    <property type="entry name" value="UPRTase/APRTase"/>
</dbReference>
<dbReference type="NCBIfam" id="TIGR01090">
    <property type="entry name" value="apt"/>
    <property type="match status" value="1"/>
</dbReference>
<dbReference type="NCBIfam" id="NF002633">
    <property type="entry name" value="PRK02304.1-2"/>
    <property type="match status" value="1"/>
</dbReference>
<dbReference type="NCBIfam" id="NF002634">
    <property type="entry name" value="PRK02304.1-3"/>
    <property type="match status" value="1"/>
</dbReference>
<dbReference type="NCBIfam" id="NF002636">
    <property type="entry name" value="PRK02304.1-5"/>
    <property type="match status" value="1"/>
</dbReference>
<dbReference type="PANTHER" id="PTHR32315">
    <property type="entry name" value="ADENINE PHOSPHORIBOSYLTRANSFERASE"/>
    <property type="match status" value="1"/>
</dbReference>
<dbReference type="PANTHER" id="PTHR32315:SF3">
    <property type="entry name" value="ADENINE PHOSPHORIBOSYLTRANSFERASE"/>
    <property type="match status" value="1"/>
</dbReference>
<dbReference type="Pfam" id="PF00156">
    <property type="entry name" value="Pribosyltran"/>
    <property type="match status" value="1"/>
</dbReference>
<dbReference type="SUPFAM" id="SSF53271">
    <property type="entry name" value="PRTase-like"/>
    <property type="match status" value="1"/>
</dbReference>